<feature type="chain" id="PRO_1000213623" description="Acetyl-coenzyme A synthetase">
    <location>
        <begin position="1"/>
        <end position="654"/>
    </location>
</feature>
<feature type="binding site" evidence="1">
    <location>
        <begin position="190"/>
        <end position="193"/>
    </location>
    <ligand>
        <name>CoA</name>
        <dbReference type="ChEBI" id="CHEBI:57287"/>
    </ligand>
</feature>
<feature type="binding site" evidence="1">
    <location>
        <position position="313"/>
    </location>
    <ligand>
        <name>CoA</name>
        <dbReference type="ChEBI" id="CHEBI:57287"/>
    </ligand>
</feature>
<feature type="binding site" evidence="1">
    <location>
        <begin position="389"/>
        <end position="391"/>
    </location>
    <ligand>
        <name>ATP</name>
        <dbReference type="ChEBI" id="CHEBI:30616"/>
    </ligand>
</feature>
<feature type="binding site" evidence="1">
    <location>
        <begin position="413"/>
        <end position="418"/>
    </location>
    <ligand>
        <name>ATP</name>
        <dbReference type="ChEBI" id="CHEBI:30616"/>
    </ligand>
</feature>
<feature type="binding site" evidence="1">
    <location>
        <position position="504"/>
    </location>
    <ligand>
        <name>ATP</name>
        <dbReference type="ChEBI" id="CHEBI:30616"/>
    </ligand>
</feature>
<feature type="binding site" evidence="1">
    <location>
        <position position="519"/>
    </location>
    <ligand>
        <name>ATP</name>
        <dbReference type="ChEBI" id="CHEBI:30616"/>
    </ligand>
</feature>
<feature type="binding site" evidence="1">
    <location>
        <position position="527"/>
    </location>
    <ligand>
        <name>CoA</name>
        <dbReference type="ChEBI" id="CHEBI:57287"/>
    </ligand>
</feature>
<feature type="binding site" evidence="1">
    <location>
        <position position="530"/>
    </location>
    <ligand>
        <name>ATP</name>
        <dbReference type="ChEBI" id="CHEBI:30616"/>
    </ligand>
</feature>
<feature type="binding site" evidence="1">
    <location>
        <position position="541"/>
    </location>
    <ligand>
        <name>Mg(2+)</name>
        <dbReference type="ChEBI" id="CHEBI:18420"/>
    </ligand>
</feature>
<feature type="binding site" evidence="1">
    <location>
        <position position="543"/>
    </location>
    <ligand>
        <name>Mg(2+)</name>
        <dbReference type="ChEBI" id="CHEBI:18420"/>
    </ligand>
</feature>
<feature type="binding site" evidence="1">
    <location>
        <position position="546"/>
    </location>
    <ligand>
        <name>Mg(2+)</name>
        <dbReference type="ChEBI" id="CHEBI:18420"/>
    </ligand>
</feature>
<feature type="modified residue" description="N6-acetyllysine" evidence="1">
    <location>
        <position position="613"/>
    </location>
</feature>
<comment type="function">
    <text evidence="1">Catalyzes the conversion of acetate into acetyl-CoA (AcCoA), an essential intermediate at the junction of anabolic and catabolic pathways. AcsA undergoes a two-step reaction. In the first half reaction, AcsA combines acetate with ATP to form acetyl-adenylate (AcAMP) intermediate. In the second half reaction, it can then transfer the acetyl group from AcAMP to the sulfhydryl group of CoA, forming the product AcCoA.</text>
</comment>
<comment type="catalytic activity">
    <reaction evidence="1">
        <text>acetate + ATP + CoA = acetyl-CoA + AMP + diphosphate</text>
        <dbReference type="Rhea" id="RHEA:23176"/>
        <dbReference type="ChEBI" id="CHEBI:30089"/>
        <dbReference type="ChEBI" id="CHEBI:30616"/>
        <dbReference type="ChEBI" id="CHEBI:33019"/>
        <dbReference type="ChEBI" id="CHEBI:57287"/>
        <dbReference type="ChEBI" id="CHEBI:57288"/>
        <dbReference type="ChEBI" id="CHEBI:456215"/>
        <dbReference type="EC" id="6.2.1.1"/>
    </reaction>
</comment>
<comment type="cofactor">
    <cofactor evidence="1">
        <name>Mg(2+)</name>
        <dbReference type="ChEBI" id="CHEBI:18420"/>
    </cofactor>
</comment>
<comment type="PTM">
    <text evidence="1">Acetylated. Deacetylation by the SIR2-homolog deacetylase activates the enzyme.</text>
</comment>
<comment type="similarity">
    <text evidence="1">Belongs to the ATP-dependent AMP-binding enzyme family.</text>
</comment>
<evidence type="ECO:0000255" key="1">
    <source>
        <dbReference type="HAMAP-Rule" id="MF_01123"/>
    </source>
</evidence>
<accession>B0SRX5</accession>
<dbReference type="EC" id="6.2.1.1" evidence="1"/>
<dbReference type="EMBL" id="CP000786">
    <property type="protein sequence ID" value="ABZ99510.1"/>
    <property type="molecule type" value="Genomic_DNA"/>
</dbReference>
<dbReference type="SMR" id="B0SRX5"/>
<dbReference type="STRING" id="456481.LEPBI_I3450"/>
<dbReference type="KEGG" id="lbi:LEPBI_I3450"/>
<dbReference type="HOGENOM" id="CLU_000022_3_6_12"/>
<dbReference type="OrthoDB" id="9778383at2"/>
<dbReference type="BioCyc" id="LBIF456481:LEPBI_RS16905-MONOMER"/>
<dbReference type="Proteomes" id="UP000001847">
    <property type="component" value="Chromosome I"/>
</dbReference>
<dbReference type="GO" id="GO:0005829">
    <property type="term" value="C:cytosol"/>
    <property type="evidence" value="ECO:0007669"/>
    <property type="project" value="TreeGrafter"/>
</dbReference>
<dbReference type="GO" id="GO:0003987">
    <property type="term" value="F:acetate-CoA ligase activity"/>
    <property type="evidence" value="ECO:0007669"/>
    <property type="project" value="UniProtKB-UniRule"/>
</dbReference>
<dbReference type="GO" id="GO:0016208">
    <property type="term" value="F:AMP binding"/>
    <property type="evidence" value="ECO:0007669"/>
    <property type="project" value="InterPro"/>
</dbReference>
<dbReference type="GO" id="GO:0005524">
    <property type="term" value="F:ATP binding"/>
    <property type="evidence" value="ECO:0007669"/>
    <property type="project" value="UniProtKB-KW"/>
</dbReference>
<dbReference type="GO" id="GO:0046872">
    <property type="term" value="F:metal ion binding"/>
    <property type="evidence" value="ECO:0007669"/>
    <property type="project" value="UniProtKB-KW"/>
</dbReference>
<dbReference type="GO" id="GO:0019427">
    <property type="term" value="P:acetyl-CoA biosynthetic process from acetate"/>
    <property type="evidence" value="ECO:0007669"/>
    <property type="project" value="InterPro"/>
</dbReference>
<dbReference type="CDD" id="cd05966">
    <property type="entry name" value="ACS"/>
    <property type="match status" value="1"/>
</dbReference>
<dbReference type="FunFam" id="3.30.300.30:FF:000004">
    <property type="entry name" value="Acetyl-coenzyme A synthetase"/>
    <property type="match status" value="1"/>
</dbReference>
<dbReference type="FunFam" id="3.40.50.12780:FF:000001">
    <property type="entry name" value="Acetyl-coenzyme A synthetase"/>
    <property type="match status" value="1"/>
</dbReference>
<dbReference type="Gene3D" id="3.30.300.30">
    <property type="match status" value="1"/>
</dbReference>
<dbReference type="Gene3D" id="3.40.50.12780">
    <property type="entry name" value="N-terminal domain of ligase-like"/>
    <property type="match status" value="1"/>
</dbReference>
<dbReference type="HAMAP" id="MF_01123">
    <property type="entry name" value="Ac_CoA_synth"/>
    <property type="match status" value="1"/>
</dbReference>
<dbReference type="InterPro" id="IPR011904">
    <property type="entry name" value="Ac_CoA_lig"/>
</dbReference>
<dbReference type="InterPro" id="IPR032387">
    <property type="entry name" value="ACAS_N"/>
</dbReference>
<dbReference type="InterPro" id="IPR025110">
    <property type="entry name" value="AMP-bd_C"/>
</dbReference>
<dbReference type="InterPro" id="IPR045851">
    <property type="entry name" value="AMP-bd_C_sf"/>
</dbReference>
<dbReference type="InterPro" id="IPR020845">
    <property type="entry name" value="AMP-binding_CS"/>
</dbReference>
<dbReference type="InterPro" id="IPR000873">
    <property type="entry name" value="AMP-dep_synth/lig_dom"/>
</dbReference>
<dbReference type="InterPro" id="IPR042099">
    <property type="entry name" value="ANL_N_sf"/>
</dbReference>
<dbReference type="NCBIfam" id="TIGR02188">
    <property type="entry name" value="Ac_CoA_lig_AcsA"/>
    <property type="match status" value="1"/>
</dbReference>
<dbReference type="NCBIfam" id="NF001208">
    <property type="entry name" value="PRK00174.1"/>
    <property type="match status" value="1"/>
</dbReference>
<dbReference type="PANTHER" id="PTHR24095">
    <property type="entry name" value="ACETYL-COENZYME A SYNTHETASE"/>
    <property type="match status" value="1"/>
</dbReference>
<dbReference type="PANTHER" id="PTHR24095:SF14">
    <property type="entry name" value="ACETYL-COENZYME A SYNTHETASE 1"/>
    <property type="match status" value="1"/>
</dbReference>
<dbReference type="Pfam" id="PF16177">
    <property type="entry name" value="ACAS_N"/>
    <property type="match status" value="1"/>
</dbReference>
<dbReference type="Pfam" id="PF00501">
    <property type="entry name" value="AMP-binding"/>
    <property type="match status" value="1"/>
</dbReference>
<dbReference type="Pfam" id="PF13193">
    <property type="entry name" value="AMP-binding_C"/>
    <property type="match status" value="1"/>
</dbReference>
<dbReference type="SUPFAM" id="SSF56801">
    <property type="entry name" value="Acetyl-CoA synthetase-like"/>
    <property type="match status" value="1"/>
</dbReference>
<dbReference type="PROSITE" id="PS00455">
    <property type="entry name" value="AMP_BINDING"/>
    <property type="match status" value="1"/>
</dbReference>
<reference key="1">
    <citation type="journal article" date="2008" name="PLoS ONE">
        <title>Genome sequence of the saprophyte Leptospira biflexa provides insights into the evolution of Leptospira and the pathogenesis of leptospirosis.</title>
        <authorList>
            <person name="Picardeau M."/>
            <person name="Bulach D.M."/>
            <person name="Bouchier C."/>
            <person name="Zuerner R.L."/>
            <person name="Zidane N."/>
            <person name="Wilson P.J."/>
            <person name="Creno S."/>
            <person name="Kuczek E.S."/>
            <person name="Bommezzadri S."/>
            <person name="Davis J.C."/>
            <person name="McGrath A."/>
            <person name="Johnson M.J."/>
            <person name="Boursaux-Eude C."/>
            <person name="Seemann T."/>
            <person name="Rouy Z."/>
            <person name="Coppel R.L."/>
            <person name="Rood J.I."/>
            <person name="Lajus A."/>
            <person name="Davies J.K."/>
            <person name="Medigue C."/>
            <person name="Adler B."/>
        </authorList>
    </citation>
    <scope>NUCLEOTIDE SEQUENCE [LARGE SCALE GENOMIC DNA]</scope>
    <source>
        <strain>Patoc 1 / ATCC 23582 / Paris</strain>
    </source>
</reference>
<organism>
    <name type="scientific">Leptospira biflexa serovar Patoc (strain Patoc 1 / ATCC 23582 / Paris)</name>
    <dbReference type="NCBI Taxonomy" id="456481"/>
    <lineage>
        <taxon>Bacteria</taxon>
        <taxon>Pseudomonadati</taxon>
        <taxon>Spirochaetota</taxon>
        <taxon>Spirochaetia</taxon>
        <taxon>Leptospirales</taxon>
        <taxon>Leptospiraceae</taxon>
        <taxon>Leptospira</taxon>
    </lineage>
</organism>
<proteinExistence type="inferred from homology"/>
<sequence length="654" mass="73318">MPKERIVAPSKEFAKLANVSLKEYKSKYKESIEKPEKFWAEQAKRLTWFKKWTKVLRHDFAKAKVEWFVGGKLNVSYNCLDRHLDSPLKNKAALIWEGDNPDESKVLTYHDLHREVNHFANVLKKFKVKKGDRVLIYLPMVPELAIATLACTRIGAVHSVVFGGFSPEALLGRIEDCKPTLVITADGGYRGGKPIELKKNVDAALAETKFKVNDVIVVKRTGDEGNLNWKEGRDHWYHYLMKDPEVKKECPAVPMESEDPLFILYTSGSTGKPKGVLHTTAGYLLGANLTFATIFDYKDTDTYWCTADIGWITGHSYILYGPLSNGATSLMFEGVPSYPDMGRFWDVIDKYKVTVFYTAPTAIRALMREGLEHIKKRSLASLRLLGSVGEPINPEAWEWYYANIGKSKCPIVDTWWQTETGSIMISGIPGAIPQKPGSASWPFYGIQPVLVDNEGVELKGKGEISGNLCIAKPWPSMMRGVYGDPKRFFDTYFSQFKGYYFTGDGANRDKEGYFRITGRVDDVLNVSGHRIGSAEVESALVEHKSVAEAAVVGFPHDIKGQGIYAYVTVKQGVVTNDLLKKELIAMVEKVIGKIARPDVIHWAPGLPKTRSGKIMRRILRKIANNEFDTLGDISTLADPSVVQSLIDDKKKYHS</sequence>
<name>ACSA_LEPBP</name>
<gene>
    <name evidence="1" type="primary">acsA</name>
    <name type="ordered locus">LEPBI_I3450</name>
</gene>
<keyword id="KW-0007">Acetylation</keyword>
<keyword id="KW-0067">ATP-binding</keyword>
<keyword id="KW-0436">Ligase</keyword>
<keyword id="KW-0460">Magnesium</keyword>
<keyword id="KW-0479">Metal-binding</keyword>
<keyword id="KW-0547">Nucleotide-binding</keyword>
<keyword id="KW-1185">Reference proteome</keyword>
<protein>
    <recommendedName>
        <fullName evidence="1">Acetyl-coenzyme A synthetase</fullName>
        <shortName evidence="1">AcCoA synthetase</shortName>
        <shortName evidence="1">Acs</shortName>
        <ecNumber evidence="1">6.2.1.1</ecNumber>
    </recommendedName>
    <alternativeName>
        <fullName evidence="1">Acetate--CoA ligase</fullName>
    </alternativeName>
    <alternativeName>
        <fullName evidence="1">Acyl-activating enzyme</fullName>
    </alternativeName>
</protein>